<reference key="1">
    <citation type="journal article" date="2009" name="Genome Res.">
        <title>Whole genome sequence of Desulfovibrio magneticus strain RS-1 revealed common gene clusters in magnetotactic bacteria.</title>
        <authorList>
            <person name="Nakazawa H."/>
            <person name="Arakaki A."/>
            <person name="Narita-Yamada S."/>
            <person name="Yashiro I."/>
            <person name="Jinno K."/>
            <person name="Aoki N."/>
            <person name="Tsuruyama A."/>
            <person name="Okamura Y."/>
            <person name="Tanikawa S."/>
            <person name="Fujita N."/>
            <person name="Takeyama H."/>
            <person name="Matsunaga T."/>
        </authorList>
    </citation>
    <scope>NUCLEOTIDE SEQUENCE [LARGE SCALE GENOMIC DNA]</scope>
    <source>
        <strain>ATCC 700980 / DSM 13731 / RS-1</strain>
    </source>
</reference>
<evidence type="ECO:0000255" key="1">
    <source>
        <dbReference type="HAMAP-Rule" id="MF_00344"/>
    </source>
</evidence>
<name>GUAA_SOLM1</name>
<sequence>MSQPDKVLILDFGSQYTQLIARRVREAGVYSEIHPCTVTAKEVAAMAPKAVILSGGPSSVADADAPPFDPAVFDLGLPMLCICYGMQLLAHHLPGGQVAASTDREYGRADLQLLADTPLFAGLPQKDGHIVWMSHGDKVMAAPDGFVVAARTKNVDIAALANASRRIYALQFHPEVAHTEDGERILHNFLFEIAGLTSGWTMSSFLETELASLKEKVGDDEVVCALSGGVDSTVVAVMLHKAIGKKLHCIFVDNGLLRMGEGEEVAAYLREHFDLNLHYVDAAKLFLDKLAGVTDPEEKRKIIGKTFIEVFEVEAAKLPKVKYLAQGTLYPDVIESVSFKGPSAVIKSHHNVGGLPEVMKLALIEPLRELFKDEVRKVAVELGMPDFIIWRHPFPGPGLAIRIIGEVTEERLEILRRTDKIVQSELVASGWYRKVWQGFAVLLPLKTVGVMGDGRTYENVAAIRVVDSLDAMTADWSRLPSEILAVMSNRIINEVKGVNRVVFDVSSKPPATIEWE</sequence>
<proteinExistence type="inferred from homology"/>
<keyword id="KW-0067">ATP-binding</keyword>
<keyword id="KW-0315">Glutamine amidotransferase</keyword>
<keyword id="KW-0332">GMP biosynthesis</keyword>
<keyword id="KW-0436">Ligase</keyword>
<keyword id="KW-0547">Nucleotide-binding</keyword>
<keyword id="KW-0658">Purine biosynthesis</keyword>
<organism>
    <name type="scientific">Solidesulfovibrio magneticus (strain ATCC 700980 / DSM 13731 / RS-1)</name>
    <name type="common">Desulfovibrio magneticus</name>
    <dbReference type="NCBI Taxonomy" id="573370"/>
    <lineage>
        <taxon>Bacteria</taxon>
        <taxon>Pseudomonadati</taxon>
        <taxon>Thermodesulfobacteriota</taxon>
        <taxon>Desulfovibrionia</taxon>
        <taxon>Desulfovibrionales</taxon>
        <taxon>Desulfovibrionaceae</taxon>
        <taxon>Solidesulfovibrio</taxon>
    </lineage>
</organism>
<dbReference type="EC" id="6.3.5.2" evidence="1"/>
<dbReference type="EMBL" id="AP010904">
    <property type="protein sequence ID" value="BAH75730.1"/>
    <property type="molecule type" value="Genomic_DNA"/>
</dbReference>
<dbReference type="RefSeq" id="WP_015860913.1">
    <property type="nucleotide sequence ID" value="NC_012796.1"/>
</dbReference>
<dbReference type="SMR" id="C4XSN8"/>
<dbReference type="STRING" id="573370.DMR_22390"/>
<dbReference type="MEROPS" id="C26.957"/>
<dbReference type="KEGG" id="dma:DMR_22390"/>
<dbReference type="eggNOG" id="COG0519">
    <property type="taxonomic scope" value="Bacteria"/>
</dbReference>
<dbReference type="HOGENOM" id="CLU_014340_0_5_7"/>
<dbReference type="OrthoDB" id="9802219at2"/>
<dbReference type="UniPathway" id="UPA00189">
    <property type="reaction ID" value="UER00296"/>
</dbReference>
<dbReference type="Proteomes" id="UP000009071">
    <property type="component" value="Chromosome"/>
</dbReference>
<dbReference type="GO" id="GO:0005829">
    <property type="term" value="C:cytosol"/>
    <property type="evidence" value="ECO:0007669"/>
    <property type="project" value="TreeGrafter"/>
</dbReference>
<dbReference type="GO" id="GO:0005524">
    <property type="term" value="F:ATP binding"/>
    <property type="evidence" value="ECO:0007669"/>
    <property type="project" value="UniProtKB-UniRule"/>
</dbReference>
<dbReference type="GO" id="GO:0003921">
    <property type="term" value="F:GMP synthase activity"/>
    <property type="evidence" value="ECO:0007669"/>
    <property type="project" value="InterPro"/>
</dbReference>
<dbReference type="CDD" id="cd01742">
    <property type="entry name" value="GATase1_GMP_Synthase"/>
    <property type="match status" value="1"/>
</dbReference>
<dbReference type="CDD" id="cd01997">
    <property type="entry name" value="GMP_synthase_C"/>
    <property type="match status" value="1"/>
</dbReference>
<dbReference type="FunFam" id="3.30.300.10:FF:000002">
    <property type="entry name" value="GMP synthase [glutamine-hydrolyzing]"/>
    <property type="match status" value="1"/>
</dbReference>
<dbReference type="FunFam" id="3.40.50.620:FF:000001">
    <property type="entry name" value="GMP synthase [glutamine-hydrolyzing]"/>
    <property type="match status" value="1"/>
</dbReference>
<dbReference type="FunFam" id="3.40.50.880:FF:000001">
    <property type="entry name" value="GMP synthase [glutamine-hydrolyzing]"/>
    <property type="match status" value="1"/>
</dbReference>
<dbReference type="Gene3D" id="3.30.300.10">
    <property type="match status" value="1"/>
</dbReference>
<dbReference type="Gene3D" id="3.40.50.880">
    <property type="match status" value="1"/>
</dbReference>
<dbReference type="Gene3D" id="3.40.50.620">
    <property type="entry name" value="HUPs"/>
    <property type="match status" value="1"/>
</dbReference>
<dbReference type="HAMAP" id="MF_00344">
    <property type="entry name" value="GMP_synthase"/>
    <property type="match status" value="1"/>
</dbReference>
<dbReference type="InterPro" id="IPR029062">
    <property type="entry name" value="Class_I_gatase-like"/>
</dbReference>
<dbReference type="InterPro" id="IPR017926">
    <property type="entry name" value="GATASE"/>
</dbReference>
<dbReference type="InterPro" id="IPR001674">
    <property type="entry name" value="GMP_synth_C"/>
</dbReference>
<dbReference type="InterPro" id="IPR004739">
    <property type="entry name" value="GMP_synth_GATase"/>
</dbReference>
<dbReference type="InterPro" id="IPR022955">
    <property type="entry name" value="GMP_synthase"/>
</dbReference>
<dbReference type="InterPro" id="IPR025777">
    <property type="entry name" value="GMPS_ATP_PPase_dom"/>
</dbReference>
<dbReference type="InterPro" id="IPR022310">
    <property type="entry name" value="NAD/GMP_synthase"/>
</dbReference>
<dbReference type="InterPro" id="IPR014729">
    <property type="entry name" value="Rossmann-like_a/b/a_fold"/>
</dbReference>
<dbReference type="NCBIfam" id="TIGR00884">
    <property type="entry name" value="guaA_Cterm"/>
    <property type="match status" value="1"/>
</dbReference>
<dbReference type="NCBIfam" id="TIGR00888">
    <property type="entry name" value="guaA_Nterm"/>
    <property type="match status" value="1"/>
</dbReference>
<dbReference type="NCBIfam" id="NF000848">
    <property type="entry name" value="PRK00074.1"/>
    <property type="match status" value="1"/>
</dbReference>
<dbReference type="PANTHER" id="PTHR11922:SF2">
    <property type="entry name" value="GMP SYNTHASE [GLUTAMINE-HYDROLYZING]"/>
    <property type="match status" value="1"/>
</dbReference>
<dbReference type="PANTHER" id="PTHR11922">
    <property type="entry name" value="GMP SYNTHASE-RELATED"/>
    <property type="match status" value="1"/>
</dbReference>
<dbReference type="Pfam" id="PF00117">
    <property type="entry name" value="GATase"/>
    <property type="match status" value="1"/>
</dbReference>
<dbReference type="Pfam" id="PF00958">
    <property type="entry name" value="GMP_synt_C"/>
    <property type="match status" value="1"/>
</dbReference>
<dbReference type="Pfam" id="PF02540">
    <property type="entry name" value="NAD_synthase"/>
    <property type="match status" value="1"/>
</dbReference>
<dbReference type="PRINTS" id="PR00096">
    <property type="entry name" value="GATASE"/>
</dbReference>
<dbReference type="SUPFAM" id="SSF52402">
    <property type="entry name" value="Adenine nucleotide alpha hydrolases-like"/>
    <property type="match status" value="1"/>
</dbReference>
<dbReference type="SUPFAM" id="SSF52317">
    <property type="entry name" value="Class I glutamine amidotransferase-like"/>
    <property type="match status" value="1"/>
</dbReference>
<dbReference type="SUPFAM" id="SSF54810">
    <property type="entry name" value="GMP synthetase C-terminal dimerisation domain"/>
    <property type="match status" value="1"/>
</dbReference>
<dbReference type="PROSITE" id="PS51273">
    <property type="entry name" value="GATASE_TYPE_1"/>
    <property type="match status" value="1"/>
</dbReference>
<dbReference type="PROSITE" id="PS51553">
    <property type="entry name" value="GMPS_ATP_PPASE"/>
    <property type="match status" value="1"/>
</dbReference>
<feature type="chain" id="PRO_1000205299" description="GMP synthase [glutamine-hydrolyzing]">
    <location>
        <begin position="1"/>
        <end position="516"/>
    </location>
</feature>
<feature type="domain" description="Glutamine amidotransferase type-1" evidence="1">
    <location>
        <begin position="6"/>
        <end position="199"/>
    </location>
</feature>
<feature type="domain" description="GMPS ATP-PPase" evidence="1">
    <location>
        <begin position="200"/>
        <end position="391"/>
    </location>
</feature>
<feature type="active site" description="Nucleophile" evidence="1">
    <location>
        <position position="83"/>
    </location>
</feature>
<feature type="active site" evidence="1">
    <location>
        <position position="173"/>
    </location>
</feature>
<feature type="active site" evidence="1">
    <location>
        <position position="175"/>
    </location>
</feature>
<feature type="binding site" evidence="1">
    <location>
        <begin position="227"/>
        <end position="233"/>
    </location>
    <ligand>
        <name>ATP</name>
        <dbReference type="ChEBI" id="CHEBI:30616"/>
    </ligand>
</feature>
<protein>
    <recommendedName>
        <fullName evidence="1">GMP synthase [glutamine-hydrolyzing]</fullName>
        <ecNumber evidence="1">6.3.5.2</ecNumber>
    </recommendedName>
    <alternativeName>
        <fullName evidence="1">GMP synthetase</fullName>
    </alternativeName>
    <alternativeName>
        <fullName evidence="1">Glutamine amidotransferase</fullName>
    </alternativeName>
</protein>
<comment type="function">
    <text evidence="1">Catalyzes the synthesis of GMP from XMP.</text>
</comment>
<comment type="catalytic activity">
    <reaction evidence="1">
        <text>XMP + L-glutamine + ATP + H2O = GMP + L-glutamate + AMP + diphosphate + 2 H(+)</text>
        <dbReference type="Rhea" id="RHEA:11680"/>
        <dbReference type="ChEBI" id="CHEBI:15377"/>
        <dbReference type="ChEBI" id="CHEBI:15378"/>
        <dbReference type="ChEBI" id="CHEBI:29985"/>
        <dbReference type="ChEBI" id="CHEBI:30616"/>
        <dbReference type="ChEBI" id="CHEBI:33019"/>
        <dbReference type="ChEBI" id="CHEBI:57464"/>
        <dbReference type="ChEBI" id="CHEBI:58115"/>
        <dbReference type="ChEBI" id="CHEBI:58359"/>
        <dbReference type="ChEBI" id="CHEBI:456215"/>
        <dbReference type="EC" id="6.3.5.2"/>
    </reaction>
</comment>
<comment type="pathway">
    <text evidence="1">Purine metabolism; GMP biosynthesis; GMP from XMP (L-Gln route): step 1/1.</text>
</comment>
<comment type="subunit">
    <text evidence="1">Homodimer.</text>
</comment>
<gene>
    <name evidence="1" type="primary">guaA</name>
    <name type="ordered locus">DMR_22390</name>
</gene>
<accession>C4XSN8</accession>